<feature type="chain" id="PRO_1000093836" description="Probable translation initiation factor IF-2">
    <location>
        <begin position="1"/>
        <end position="589"/>
    </location>
</feature>
<feature type="domain" description="tr-type G">
    <location>
        <begin position="3"/>
        <end position="224"/>
    </location>
</feature>
<feature type="region of interest" description="G1" evidence="1">
    <location>
        <begin position="12"/>
        <end position="19"/>
    </location>
</feature>
<feature type="region of interest" description="G2" evidence="1">
    <location>
        <begin position="37"/>
        <end position="41"/>
    </location>
</feature>
<feature type="region of interest" description="G3" evidence="1">
    <location>
        <begin position="78"/>
        <end position="81"/>
    </location>
</feature>
<feature type="region of interest" description="G4" evidence="1">
    <location>
        <begin position="132"/>
        <end position="135"/>
    </location>
</feature>
<feature type="region of interest" description="G5" evidence="1">
    <location>
        <begin position="200"/>
        <end position="202"/>
    </location>
</feature>
<feature type="binding site" evidence="2">
    <location>
        <begin position="12"/>
        <end position="19"/>
    </location>
    <ligand>
        <name>GTP</name>
        <dbReference type="ChEBI" id="CHEBI:37565"/>
    </ligand>
</feature>
<feature type="binding site" evidence="2">
    <location>
        <begin position="78"/>
        <end position="82"/>
    </location>
    <ligand>
        <name>GTP</name>
        <dbReference type="ChEBI" id="CHEBI:37565"/>
    </ligand>
</feature>
<feature type="binding site" evidence="2">
    <location>
        <begin position="132"/>
        <end position="135"/>
    </location>
    <ligand>
        <name>GTP</name>
        <dbReference type="ChEBI" id="CHEBI:37565"/>
    </ligand>
</feature>
<sequence>MAVRSPFVVVMGHVDVGKTLLLDKIRGTSVAYREPGMITQHIGMSFVPWQAVEKYAGPLVDRLKLRGKIWIPGFLFIDTPGHAAFSNLRKRGGSVADLAILVVDITSGLEDQGVESLKLIQSRGVPFVIAANKLDRVYGWKSVENRPFLTAVEDQEWHAIATLEESIGKLVEQLSKLGVEADRYDRVRDFGRQVPIVPTSAVTGEGIADLLLVLAGVSQRFIPRDKLTVRPGPARGVVMEVKEERGLGVVADAILYDGVLKKGDTVVTAGIDGPRVAKVRMLVMPKPLEEMRDPEDRYMAVEEVKAAAGVRIVADGLEGVVAGAPLMAVRDPGEVQEAVKVVGEEISEIKIETDREGVIVRADTFGTLESTVLFLRQQGVPIRKADVGPPTHKDVVEAVLSRRKNPAYGVILAFNVKTPPEVEKEAMSSGVKIIRGEILYRIFDEYIKWSQEVKTKTVEQILSQMTRPGKIQILPGYVFRRSNPAIVGVKVLAGTIKPGVTLVKDGKEVGRVMQIQKSGKPVGEAAAGDEVAVSIQGDVMVGRQIKEGDVLYVYVPDEQARQWLFQYKQYLREDELKALEEFLKAGRRR</sequence>
<protein>
    <recommendedName>
        <fullName evidence="2">Probable translation initiation factor IF-2</fullName>
    </recommendedName>
</protein>
<reference key="1">
    <citation type="submission" date="2008-03" db="EMBL/GenBank/DDBJ databases">
        <title>Complete sequence of Thermoproteus neutrophilus V24Sta.</title>
        <authorList>
            <consortium name="US DOE Joint Genome Institute"/>
            <person name="Copeland A."/>
            <person name="Lucas S."/>
            <person name="Lapidus A."/>
            <person name="Glavina del Rio T."/>
            <person name="Dalin E."/>
            <person name="Tice H."/>
            <person name="Bruce D."/>
            <person name="Goodwin L."/>
            <person name="Pitluck S."/>
            <person name="Sims D."/>
            <person name="Brettin T."/>
            <person name="Detter J.C."/>
            <person name="Han C."/>
            <person name="Kuske C.R."/>
            <person name="Schmutz J."/>
            <person name="Larimer F."/>
            <person name="Land M."/>
            <person name="Hauser L."/>
            <person name="Kyrpides N."/>
            <person name="Mikhailova N."/>
            <person name="Biddle J.F."/>
            <person name="Zhang Z."/>
            <person name="Fitz-Gibbon S.T."/>
            <person name="Lowe T.M."/>
            <person name="Saltikov C."/>
            <person name="House C.H."/>
            <person name="Richardson P."/>
        </authorList>
    </citation>
    <scope>NUCLEOTIDE SEQUENCE [LARGE SCALE GENOMIC DNA]</scope>
    <source>
        <strain>DSM 2338 / JCM 9278 / NBRC 100436 / V24Sta</strain>
    </source>
</reference>
<name>IF2P_PYRNV</name>
<accession>B1YCQ7</accession>
<dbReference type="EMBL" id="CP001014">
    <property type="protein sequence ID" value="ACB39570.1"/>
    <property type="molecule type" value="Genomic_DNA"/>
</dbReference>
<dbReference type="RefSeq" id="WP_012349990.1">
    <property type="nucleotide sequence ID" value="NC_010525.1"/>
</dbReference>
<dbReference type="SMR" id="B1YCQ7"/>
<dbReference type="STRING" id="444157.Tneu_0631"/>
<dbReference type="GeneID" id="6166201"/>
<dbReference type="KEGG" id="tne:Tneu_0631"/>
<dbReference type="eggNOG" id="arCOG01560">
    <property type="taxonomic scope" value="Archaea"/>
</dbReference>
<dbReference type="HOGENOM" id="CLU_002656_3_3_2"/>
<dbReference type="OrthoDB" id="30957at2157"/>
<dbReference type="Proteomes" id="UP000001694">
    <property type="component" value="Chromosome"/>
</dbReference>
<dbReference type="GO" id="GO:0005737">
    <property type="term" value="C:cytoplasm"/>
    <property type="evidence" value="ECO:0007669"/>
    <property type="project" value="TreeGrafter"/>
</dbReference>
<dbReference type="GO" id="GO:0005525">
    <property type="term" value="F:GTP binding"/>
    <property type="evidence" value="ECO:0007669"/>
    <property type="project" value="UniProtKB-KW"/>
</dbReference>
<dbReference type="GO" id="GO:0003924">
    <property type="term" value="F:GTPase activity"/>
    <property type="evidence" value="ECO:0007669"/>
    <property type="project" value="UniProtKB-UniRule"/>
</dbReference>
<dbReference type="GO" id="GO:0003743">
    <property type="term" value="F:translation initiation factor activity"/>
    <property type="evidence" value="ECO:0007669"/>
    <property type="project" value="UniProtKB-UniRule"/>
</dbReference>
<dbReference type="CDD" id="cd03703">
    <property type="entry name" value="aeIF5B_II"/>
    <property type="match status" value="1"/>
</dbReference>
<dbReference type="CDD" id="cd16266">
    <property type="entry name" value="IF2_aeIF5B_IV"/>
    <property type="match status" value="1"/>
</dbReference>
<dbReference type="CDD" id="cd01887">
    <property type="entry name" value="IF2_eIF5B"/>
    <property type="match status" value="1"/>
</dbReference>
<dbReference type="FunFam" id="3.40.50.300:FF:000112">
    <property type="entry name" value="Eukaryotic translation initiation factor 5B"/>
    <property type="match status" value="1"/>
</dbReference>
<dbReference type="FunFam" id="3.40.50.10050:FF:000001">
    <property type="entry name" value="Translation initiation factor IF-2"/>
    <property type="match status" value="1"/>
</dbReference>
<dbReference type="Gene3D" id="3.40.50.300">
    <property type="entry name" value="P-loop containing nucleotide triphosphate hydrolases"/>
    <property type="match status" value="1"/>
</dbReference>
<dbReference type="Gene3D" id="2.40.30.10">
    <property type="entry name" value="Translation factors"/>
    <property type="match status" value="2"/>
</dbReference>
<dbReference type="Gene3D" id="3.40.50.10050">
    <property type="entry name" value="Translation initiation factor IF- 2, domain 3"/>
    <property type="match status" value="1"/>
</dbReference>
<dbReference type="HAMAP" id="MF_00100_A">
    <property type="entry name" value="IF_2_A"/>
    <property type="match status" value="1"/>
</dbReference>
<dbReference type="InterPro" id="IPR029459">
    <property type="entry name" value="EFTU-type"/>
</dbReference>
<dbReference type="InterPro" id="IPR027417">
    <property type="entry name" value="P-loop_NTPase"/>
</dbReference>
<dbReference type="InterPro" id="IPR005225">
    <property type="entry name" value="Small_GTP-bd"/>
</dbReference>
<dbReference type="InterPro" id="IPR000795">
    <property type="entry name" value="T_Tr_GTP-bd_dom"/>
</dbReference>
<dbReference type="InterPro" id="IPR004544">
    <property type="entry name" value="TF_aIF-2_arc"/>
</dbReference>
<dbReference type="InterPro" id="IPR015760">
    <property type="entry name" value="TIF_IF2"/>
</dbReference>
<dbReference type="InterPro" id="IPR023115">
    <property type="entry name" value="TIF_IF2_dom3"/>
</dbReference>
<dbReference type="InterPro" id="IPR036925">
    <property type="entry name" value="TIF_IF2_dom3_sf"/>
</dbReference>
<dbReference type="InterPro" id="IPR009000">
    <property type="entry name" value="Transl_B-barrel_sf"/>
</dbReference>
<dbReference type="NCBIfam" id="TIGR00491">
    <property type="entry name" value="aIF-2"/>
    <property type="match status" value="1"/>
</dbReference>
<dbReference type="NCBIfam" id="NF003078">
    <property type="entry name" value="PRK04004.1"/>
    <property type="match status" value="1"/>
</dbReference>
<dbReference type="NCBIfam" id="TIGR00231">
    <property type="entry name" value="small_GTP"/>
    <property type="match status" value="1"/>
</dbReference>
<dbReference type="PANTHER" id="PTHR43381:SF4">
    <property type="entry name" value="EUKARYOTIC TRANSLATION INITIATION FACTOR 5B"/>
    <property type="match status" value="1"/>
</dbReference>
<dbReference type="PANTHER" id="PTHR43381">
    <property type="entry name" value="TRANSLATION INITIATION FACTOR IF-2-RELATED"/>
    <property type="match status" value="1"/>
</dbReference>
<dbReference type="Pfam" id="PF00009">
    <property type="entry name" value="GTP_EFTU"/>
    <property type="match status" value="1"/>
</dbReference>
<dbReference type="Pfam" id="PF14578">
    <property type="entry name" value="GTP_EFTU_D4"/>
    <property type="match status" value="1"/>
</dbReference>
<dbReference type="Pfam" id="PF11987">
    <property type="entry name" value="IF-2"/>
    <property type="match status" value="1"/>
</dbReference>
<dbReference type="PRINTS" id="PR00315">
    <property type="entry name" value="ELONGATNFCT"/>
</dbReference>
<dbReference type="SUPFAM" id="SSF52156">
    <property type="entry name" value="Initiation factor IF2/eIF5b, domain 3"/>
    <property type="match status" value="1"/>
</dbReference>
<dbReference type="SUPFAM" id="SSF52540">
    <property type="entry name" value="P-loop containing nucleoside triphosphate hydrolases"/>
    <property type="match status" value="1"/>
</dbReference>
<dbReference type="SUPFAM" id="SSF50447">
    <property type="entry name" value="Translation proteins"/>
    <property type="match status" value="1"/>
</dbReference>
<dbReference type="PROSITE" id="PS51722">
    <property type="entry name" value="G_TR_2"/>
    <property type="match status" value="1"/>
</dbReference>
<organism>
    <name type="scientific">Pyrobaculum neutrophilum (strain DSM 2338 / JCM 9278 / NBRC 100436 / V24Sta)</name>
    <name type="common">Thermoproteus neutrophilus</name>
    <dbReference type="NCBI Taxonomy" id="444157"/>
    <lineage>
        <taxon>Archaea</taxon>
        <taxon>Thermoproteota</taxon>
        <taxon>Thermoprotei</taxon>
        <taxon>Thermoproteales</taxon>
        <taxon>Thermoproteaceae</taxon>
        <taxon>Pyrobaculum</taxon>
    </lineage>
</organism>
<proteinExistence type="inferred from homology"/>
<keyword id="KW-0342">GTP-binding</keyword>
<keyword id="KW-0396">Initiation factor</keyword>
<keyword id="KW-0547">Nucleotide-binding</keyword>
<keyword id="KW-0648">Protein biosynthesis</keyword>
<comment type="function">
    <text evidence="2">Function in general translation initiation by promoting the binding of the formylmethionine-tRNA to ribosomes. Seems to function along with eIF-2.</text>
</comment>
<comment type="similarity">
    <text evidence="2">Belongs to the TRAFAC class translation factor GTPase superfamily. Classic translation factor GTPase family. IF-2 subfamily.</text>
</comment>
<gene>
    <name evidence="2" type="primary">infB</name>
    <name type="ordered locus">Tneu_0631</name>
</gene>
<evidence type="ECO:0000250" key="1"/>
<evidence type="ECO:0000255" key="2">
    <source>
        <dbReference type="HAMAP-Rule" id="MF_00100"/>
    </source>
</evidence>